<evidence type="ECO:0000255" key="1">
    <source>
        <dbReference type="HAMAP-Rule" id="MF_00049"/>
    </source>
</evidence>
<name>SYL_SHIB3</name>
<organism>
    <name type="scientific">Shigella boydii serotype 18 (strain CDC 3083-94 / BS512)</name>
    <dbReference type="NCBI Taxonomy" id="344609"/>
    <lineage>
        <taxon>Bacteria</taxon>
        <taxon>Pseudomonadati</taxon>
        <taxon>Pseudomonadota</taxon>
        <taxon>Gammaproteobacteria</taxon>
        <taxon>Enterobacterales</taxon>
        <taxon>Enterobacteriaceae</taxon>
        <taxon>Shigella</taxon>
    </lineage>
</organism>
<sequence>MQEQYRPEEIESKVQLHWDEKRTFEVTEDESKEKYYCLSMLPYPSGRLHMGHVRNYTIGDVIARYQRMLGKNVLQPIGWDAFGLPAEGAAVKNNTAPAPWTYDNIAYMKNQLKMLGFGYDWSRELATCTPEYYRWEQKFFTELYKKGLVYKKTSAVNWCPNDQTVLANEQVIDGCCWRCDTKVERKEIPQWFIKITAYADELLNDLDKLDHWPDTVKSMQRNWIGRSEGVEITFNVNDYDNTLTVYTTRPDTFMGCTYLAVAAGHPLAQKAAENNPELAAFIDECRNTKVAEAEMATMEKKGVDTGFKAVHPLTGEEIPVWAANFVLMEYGTGAVMAVPGHDQRDYEFASKYGLNIKPVILAADGSEPDLSQQALTEKGVLFNSGEFNGLDHEAAFNAIADKLTAMGVGERKVNYRLRDWGVSRQRYWGAPIPMVTLEDGTVMPTPDDQLPVILPEDVVMDGITSPIKADPEWAKTTVNGMPALRETDTFDTFMESSWYYARYTCPEYKEGMLDSEAANYWLPVDIYIGGIEHAIMHLLYFRFFHKLMRDAGMVNSDEPAKQLLCQGMVLADAFYYVGENGERNWVSPVDAIVERDEKGRIVKAKDAAGHELVYTGMSKMSKSKNNGIDPQVMVERYGADTVRLFMMFASPADMTLEWQESGVEGANRFLKRVWKLVYEHTAKGDVAALNVDGLTEDQKALRRDVHKTIAKVTDDIGRRQTFNTAIAAIMELMNKLAKAPTDGEQDRALMQEALLAVVRMLNPFTPHICFTLWQELKGEGDIDNAPWPVADEKAMVEDSTLVVVQVNGKVRAKITVPVDATEEQVRERAGQEHLVAKYLDGVTVRKVIYVPGKLLNLVVG</sequence>
<keyword id="KW-0030">Aminoacyl-tRNA synthetase</keyword>
<keyword id="KW-0067">ATP-binding</keyword>
<keyword id="KW-0963">Cytoplasm</keyword>
<keyword id="KW-0436">Ligase</keyword>
<keyword id="KW-0547">Nucleotide-binding</keyword>
<keyword id="KW-0648">Protein biosynthesis</keyword>
<keyword id="KW-1185">Reference proteome</keyword>
<gene>
    <name evidence="1" type="primary">leuS</name>
    <name type="ordered locus">SbBS512_E0609</name>
</gene>
<comment type="catalytic activity">
    <reaction evidence="1">
        <text>tRNA(Leu) + L-leucine + ATP = L-leucyl-tRNA(Leu) + AMP + diphosphate</text>
        <dbReference type="Rhea" id="RHEA:11688"/>
        <dbReference type="Rhea" id="RHEA-COMP:9613"/>
        <dbReference type="Rhea" id="RHEA-COMP:9622"/>
        <dbReference type="ChEBI" id="CHEBI:30616"/>
        <dbReference type="ChEBI" id="CHEBI:33019"/>
        <dbReference type="ChEBI" id="CHEBI:57427"/>
        <dbReference type="ChEBI" id="CHEBI:78442"/>
        <dbReference type="ChEBI" id="CHEBI:78494"/>
        <dbReference type="ChEBI" id="CHEBI:456215"/>
        <dbReference type="EC" id="6.1.1.4"/>
    </reaction>
</comment>
<comment type="subcellular location">
    <subcellularLocation>
        <location evidence="1">Cytoplasm</location>
    </subcellularLocation>
</comment>
<comment type="similarity">
    <text evidence="1">Belongs to the class-I aminoacyl-tRNA synthetase family.</text>
</comment>
<protein>
    <recommendedName>
        <fullName evidence="1">Leucine--tRNA ligase</fullName>
        <ecNumber evidence="1">6.1.1.4</ecNumber>
    </recommendedName>
    <alternativeName>
        <fullName evidence="1">Leucyl-tRNA synthetase</fullName>
        <shortName evidence="1">LeuRS</shortName>
    </alternativeName>
</protein>
<reference key="1">
    <citation type="submission" date="2008-05" db="EMBL/GenBank/DDBJ databases">
        <title>Complete sequence of Shigella boydii serotype 18 strain BS512.</title>
        <authorList>
            <person name="Rasko D.A."/>
            <person name="Rosovitz M."/>
            <person name="Maurelli A.T."/>
            <person name="Myers G."/>
            <person name="Seshadri R."/>
            <person name="Cer R."/>
            <person name="Jiang L."/>
            <person name="Ravel J."/>
            <person name="Sebastian Y."/>
        </authorList>
    </citation>
    <scope>NUCLEOTIDE SEQUENCE [LARGE SCALE GENOMIC DNA]</scope>
    <source>
        <strain>CDC 3083-94 / BS512</strain>
    </source>
</reference>
<feature type="chain" id="PRO_1000091364" description="Leucine--tRNA ligase">
    <location>
        <begin position="1"/>
        <end position="860"/>
    </location>
</feature>
<feature type="short sequence motif" description="'HIGH' region">
    <location>
        <begin position="42"/>
        <end position="52"/>
    </location>
</feature>
<feature type="short sequence motif" description="'KMSKS' region">
    <location>
        <begin position="619"/>
        <end position="623"/>
    </location>
</feature>
<feature type="binding site" evidence="1">
    <location>
        <position position="622"/>
    </location>
    <ligand>
        <name>ATP</name>
        <dbReference type="ChEBI" id="CHEBI:30616"/>
    </ligand>
</feature>
<dbReference type="EC" id="6.1.1.4" evidence="1"/>
<dbReference type="EMBL" id="CP001063">
    <property type="protein sequence ID" value="ACD09066.1"/>
    <property type="molecule type" value="Genomic_DNA"/>
</dbReference>
<dbReference type="RefSeq" id="WP_012421531.1">
    <property type="nucleotide sequence ID" value="NC_010658.1"/>
</dbReference>
<dbReference type="SMR" id="B2TU77"/>
<dbReference type="STRING" id="344609.SbBS512_E0609"/>
<dbReference type="KEGG" id="sbc:SbBS512_E0609"/>
<dbReference type="HOGENOM" id="CLU_004427_0_0_6"/>
<dbReference type="Proteomes" id="UP000001030">
    <property type="component" value="Chromosome"/>
</dbReference>
<dbReference type="GO" id="GO:0005829">
    <property type="term" value="C:cytosol"/>
    <property type="evidence" value="ECO:0007669"/>
    <property type="project" value="TreeGrafter"/>
</dbReference>
<dbReference type="GO" id="GO:0002161">
    <property type="term" value="F:aminoacyl-tRNA deacylase activity"/>
    <property type="evidence" value="ECO:0007669"/>
    <property type="project" value="InterPro"/>
</dbReference>
<dbReference type="GO" id="GO:0005524">
    <property type="term" value="F:ATP binding"/>
    <property type="evidence" value="ECO:0007669"/>
    <property type="project" value="UniProtKB-UniRule"/>
</dbReference>
<dbReference type="GO" id="GO:0004823">
    <property type="term" value="F:leucine-tRNA ligase activity"/>
    <property type="evidence" value="ECO:0007669"/>
    <property type="project" value="UniProtKB-UniRule"/>
</dbReference>
<dbReference type="GO" id="GO:0006429">
    <property type="term" value="P:leucyl-tRNA aminoacylation"/>
    <property type="evidence" value="ECO:0007669"/>
    <property type="project" value="UniProtKB-UniRule"/>
</dbReference>
<dbReference type="CDD" id="cd07958">
    <property type="entry name" value="Anticodon_Ia_Leu_BEm"/>
    <property type="match status" value="1"/>
</dbReference>
<dbReference type="CDD" id="cd00812">
    <property type="entry name" value="LeuRS_core"/>
    <property type="match status" value="1"/>
</dbReference>
<dbReference type="FunFam" id="1.10.730.10:FF:000002">
    <property type="entry name" value="Leucine--tRNA ligase"/>
    <property type="match status" value="2"/>
</dbReference>
<dbReference type="FunFam" id="2.20.28.290:FF:000001">
    <property type="entry name" value="Leucine--tRNA ligase"/>
    <property type="match status" value="1"/>
</dbReference>
<dbReference type="FunFam" id="3.10.20.590:FF:000001">
    <property type="entry name" value="Leucine--tRNA ligase"/>
    <property type="match status" value="1"/>
</dbReference>
<dbReference type="FunFam" id="3.40.50.620:FF:000003">
    <property type="entry name" value="Leucine--tRNA ligase"/>
    <property type="match status" value="1"/>
</dbReference>
<dbReference type="FunFam" id="3.40.50.620:FF:000124">
    <property type="entry name" value="Leucine--tRNA ligase"/>
    <property type="match status" value="1"/>
</dbReference>
<dbReference type="FunFam" id="3.90.740.10:FF:000012">
    <property type="entry name" value="Leucine--tRNA ligase"/>
    <property type="match status" value="1"/>
</dbReference>
<dbReference type="Gene3D" id="2.20.28.290">
    <property type="match status" value="1"/>
</dbReference>
<dbReference type="Gene3D" id="3.10.20.590">
    <property type="match status" value="1"/>
</dbReference>
<dbReference type="Gene3D" id="3.40.50.620">
    <property type="entry name" value="HUPs"/>
    <property type="match status" value="2"/>
</dbReference>
<dbReference type="Gene3D" id="1.10.730.10">
    <property type="entry name" value="Isoleucyl-tRNA Synthetase, Domain 1"/>
    <property type="match status" value="1"/>
</dbReference>
<dbReference type="HAMAP" id="MF_00049_B">
    <property type="entry name" value="Leu_tRNA_synth_B"/>
    <property type="match status" value="1"/>
</dbReference>
<dbReference type="InterPro" id="IPR001412">
    <property type="entry name" value="aa-tRNA-synth_I_CS"/>
</dbReference>
<dbReference type="InterPro" id="IPR002300">
    <property type="entry name" value="aa-tRNA-synth_Ia"/>
</dbReference>
<dbReference type="InterPro" id="IPR002302">
    <property type="entry name" value="Leu-tRNA-ligase"/>
</dbReference>
<dbReference type="InterPro" id="IPR025709">
    <property type="entry name" value="Leu_tRNA-synth_edit"/>
</dbReference>
<dbReference type="InterPro" id="IPR013155">
    <property type="entry name" value="M/V/L/I-tRNA-synth_anticd-bd"/>
</dbReference>
<dbReference type="InterPro" id="IPR015413">
    <property type="entry name" value="Methionyl/Leucyl_tRNA_Synth"/>
</dbReference>
<dbReference type="InterPro" id="IPR014729">
    <property type="entry name" value="Rossmann-like_a/b/a_fold"/>
</dbReference>
<dbReference type="InterPro" id="IPR009080">
    <property type="entry name" value="tRNAsynth_Ia_anticodon-bd"/>
</dbReference>
<dbReference type="InterPro" id="IPR009008">
    <property type="entry name" value="Val/Leu/Ile-tRNA-synth_edit"/>
</dbReference>
<dbReference type="NCBIfam" id="TIGR00396">
    <property type="entry name" value="leuS_bact"/>
    <property type="match status" value="1"/>
</dbReference>
<dbReference type="PANTHER" id="PTHR43740:SF2">
    <property type="entry name" value="LEUCINE--TRNA LIGASE, MITOCHONDRIAL"/>
    <property type="match status" value="1"/>
</dbReference>
<dbReference type="PANTHER" id="PTHR43740">
    <property type="entry name" value="LEUCYL-TRNA SYNTHETASE"/>
    <property type="match status" value="1"/>
</dbReference>
<dbReference type="Pfam" id="PF08264">
    <property type="entry name" value="Anticodon_1"/>
    <property type="match status" value="1"/>
</dbReference>
<dbReference type="Pfam" id="PF00133">
    <property type="entry name" value="tRNA-synt_1"/>
    <property type="match status" value="2"/>
</dbReference>
<dbReference type="Pfam" id="PF13603">
    <property type="entry name" value="tRNA-synt_1_2"/>
    <property type="match status" value="1"/>
</dbReference>
<dbReference type="Pfam" id="PF09334">
    <property type="entry name" value="tRNA-synt_1g"/>
    <property type="match status" value="1"/>
</dbReference>
<dbReference type="PRINTS" id="PR00985">
    <property type="entry name" value="TRNASYNTHLEU"/>
</dbReference>
<dbReference type="SUPFAM" id="SSF47323">
    <property type="entry name" value="Anticodon-binding domain of a subclass of class I aminoacyl-tRNA synthetases"/>
    <property type="match status" value="1"/>
</dbReference>
<dbReference type="SUPFAM" id="SSF52374">
    <property type="entry name" value="Nucleotidylyl transferase"/>
    <property type="match status" value="1"/>
</dbReference>
<dbReference type="SUPFAM" id="SSF50677">
    <property type="entry name" value="ValRS/IleRS/LeuRS editing domain"/>
    <property type="match status" value="1"/>
</dbReference>
<dbReference type="PROSITE" id="PS00178">
    <property type="entry name" value="AA_TRNA_LIGASE_I"/>
    <property type="match status" value="1"/>
</dbReference>
<proteinExistence type="inferred from homology"/>
<accession>B2TU77</accession>